<name>EFTU_STRZT</name>
<keyword id="KW-0963">Cytoplasm</keyword>
<keyword id="KW-0251">Elongation factor</keyword>
<keyword id="KW-0342">GTP-binding</keyword>
<keyword id="KW-0378">Hydrolase</keyword>
<keyword id="KW-0460">Magnesium</keyword>
<keyword id="KW-0479">Metal-binding</keyword>
<keyword id="KW-0547">Nucleotide-binding</keyword>
<keyword id="KW-0648">Protein biosynthesis</keyword>
<reference key="1">
    <citation type="journal article" date="2010" name="Genome Biol.">
        <title>Structure and dynamics of the pan-genome of Streptococcus pneumoniae and closely related species.</title>
        <authorList>
            <person name="Donati C."/>
            <person name="Hiller N.L."/>
            <person name="Tettelin H."/>
            <person name="Muzzi A."/>
            <person name="Croucher N.J."/>
            <person name="Angiuoli S.V."/>
            <person name="Oggioni M."/>
            <person name="Dunning Hotopp J.C."/>
            <person name="Hu F.Z."/>
            <person name="Riley D.R."/>
            <person name="Covacci A."/>
            <person name="Mitchell T.J."/>
            <person name="Bentley S.D."/>
            <person name="Kilian M."/>
            <person name="Ehrlich G.D."/>
            <person name="Rappuoli R."/>
            <person name="Moxon E.R."/>
            <person name="Masignani V."/>
        </authorList>
    </citation>
    <scope>NUCLEOTIDE SEQUENCE [LARGE SCALE GENOMIC DNA]</scope>
    <source>
        <strain>Taiwan19F-14</strain>
    </source>
</reference>
<comment type="function">
    <text evidence="2">GTP hydrolase that promotes the GTP-dependent binding of aminoacyl-tRNA to the A-site of ribosomes during protein biosynthesis.</text>
</comment>
<comment type="catalytic activity">
    <reaction evidence="2">
        <text>GTP + H2O = GDP + phosphate + H(+)</text>
        <dbReference type="Rhea" id="RHEA:19669"/>
        <dbReference type="ChEBI" id="CHEBI:15377"/>
        <dbReference type="ChEBI" id="CHEBI:15378"/>
        <dbReference type="ChEBI" id="CHEBI:37565"/>
        <dbReference type="ChEBI" id="CHEBI:43474"/>
        <dbReference type="ChEBI" id="CHEBI:58189"/>
        <dbReference type="EC" id="3.6.5.3"/>
    </reaction>
    <physiologicalReaction direction="left-to-right" evidence="2">
        <dbReference type="Rhea" id="RHEA:19670"/>
    </physiologicalReaction>
</comment>
<comment type="subunit">
    <text evidence="2">Monomer.</text>
</comment>
<comment type="subcellular location">
    <subcellularLocation>
        <location evidence="2">Cytoplasm</location>
    </subcellularLocation>
</comment>
<comment type="similarity">
    <text evidence="2">Belongs to the TRAFAC class translation factor GTPase superfamily. Classic translation factor GTPase family. EF-Tu/EF-1A subfamily.</text>
</comment>
<feature type="chain" id="PRO_1000201417" description="Elongation factor Tu">
    <location>
        <begin position="1"/>
        <end position="398"/>
    </location>
</feature>
<feature type="domain" description="tr-type G">
    <location>
        <begin position="10"/>
        <end position="207"/>
    </location>
</feature>
<feature type="region of interest" description="G1" evidence="1">
    <location>
        <begin position="19"/>
        <end position="26"/>
    </location>
</feature>
<feature type="region of interest" description="G2" evidence="1">
    <location>
        <begin position="63"/>
        <end position="67"/>
    </location>
</feature>
<feature type="region of interest" description="G3" evidence="1">
    <location>
        <begin position="84"/>
        <end position="87"/>
    </location>
</feature>
<feature type="region of interest" description="G4" evidence="1">
    <location>
        <begin position="139"/>
        <end position="142"/>
    </location>
</feature>
<feature type="region of interest" description="G5" evidence="1">
    <location>
        <begin position="177"/>
        <end position="179"/>
    </location>
</feature>
<feature type="binding site" evidence="2">
    <location>
        <begin position="19"/>
        <end position="26"/>
    </location>
    <ligand>
        <name>GTP</name>
        <dbReference type="ChEBI" id="CHEBI:37565"/>
    </ligand>
</feature>
<feature type="binding site" evidence="2">
    <location>
        <position position="26"/>
    </location>
    <ligand>
        <name>Mg(2+)</name>
        <dbReference type="ChEBI" id="CHEBI:18420"/>
    </ligand>
</feature>
<feature type="binding site" evidence="2">
    <location>
        <begin position="84"/>
        <end position="88"/>
    </location>
    <ligand>
        <name>GTP</name>
        <dbReference type="ChEBI" id="CHEBI:37565"/>
    </ligand>
</feature>
<feature type="binding site" evidence="2">
    <location>
        <begin position="139"/>
        <end position="142"/>
    </location>
    <ligand>
        <name>GTP</name>
        <dbReference type="ChEBI" id="CHEBI:37565"/>
    </ligand>
</feature>
<organism>
    <name type="scientific">Streptococcus pneumoniae (strain Taiwan19F-14)</name>
    <dbReference type="NCBI Taxonomy" id="487213"/>
    <lineage>
        <taxon>Bacteria</taxon>
        <taxon>Bacillati</taxon>
        <taxon>Bacillota</taxon>
        <taxon>Bacilli</taxon>
        <taxon>Lactobacillales</taxon>
        <taxon>Streptococcaceae</taxon>
        <taxon>Streptococcus</taxon>
    </lineage>
</organism>
<sequence>MAKEKYDRSKPHVNIGTIGHVDHGKTTLTAAITTVLARRLPSSVNQPKDYASIDAAPEERERGITINTAHVEYETEKRHYAHIDAPGHADYVKNMITGAAQMDGAILVVASTDGPMPQTREHILLSRQVGVKHLIVFMNKVDLVDDEELLELVEMEIRDLLSEYDFPGDDLPVIQGSALKALEGDSKYEDIVMELMNTVDEYIPEPERDTDKPLLLPVEDVFSITGRGTVASGRIDRGIVKVNDEIEIVGIKEETQKAVVTGVEMFRKQLDEGLAGDNVGVLLRGVQRDEIERGQVIAKPGSINPHTKFKGEVYILTKEEGGRHTPFFNNYRPQFYFRTTDVTGSIELPAGTEMVMPGDNVTIDVELIHPIAVEQGTTFSIREGGRTVGSGMVTEIEA</sequence>
<dbReference type="EC" id="3.6.5.3" evidence="2"/>
<dbReference type="EMBL" id="CP000921">
    <property type="protein sequence ID" value="ACO22538.1"/>
    <property type="molecule type" value="Genomic_DNA"/>
</dbReference>
<dbReference type="RefSeq" id="WP_001040724.1">
    <property type="nucleotide sequence ID" value="NC_012469.1"/>
</dbReference>
<dbReference type="SMR" id="C1CSB0"/>
<dbReference type="GeneID" id="45653269"/>
<dbReference type="KEGG" id="snt:SPT_1426"/>
<dbReference type="HOGENOM" id="CLU_007265_0_1_9"/>
<dbReference type="GO" id="GO:0005829">
    <property type="term" value="C:cytosol"/>
    <property type="evidence" value="ECO:0007669"/>
    <property type="project" value="TreeGrafter"/>
</dbReference>
<dbReference type="GO" id="GO:0005525">
    <property type="term" value="F:GTP binding"/>
    <property type="evidence" value="ECO:0007669"/>
    <property type="project" value="UniProtKB-UniRule"/>
</dbReference>
<dbReference type="GO" id="GO:0003924">
    <property type="term" value="F:GTPase activity"/>
    <property type="evidence" value="ECO:0007669"/>
    <property type="project" value="InterPro"/>
</dbReference>
<dbReference type="GO" id="GO:0003746">
    <property type="term" value="F:translation elongation factor activity"/>
    <property type="evidence" value="ECO:0007669"/>
    <property type="project" value="UniProtKB-UniRule"/>
</dbReference>
<dbReference type="CDD" id="cd01884">
    <property type="entry name" value="EF_Tu"/>
    <property type="match status" value="1"/>
</dbReference>
<dbReference type="CDD" id="cd03697">
    <property type="entry name" value="EFTU_II"/>
    <property type="match status" value="1"/>
</dbReference>
<dbReference type="CDD" id="cd03707">
    <property type="entry name" value="EFTU_III"/>
    <property type="match status" value="1"/>
</dbReference>
<dbReference type="FunFam" id="2.40.30.10:FF:000001">
    <property type="entry name" value="Elongation factor Tu"/>
    <property type="match status" value="1"/>
</dbReference>
<dbReference type="FunFam" id="3.40.50.300:FF:000003">
    <property type="entry name" value="Elongation factor Tu"/>
    <property type="match status" value="1"/>
</dbReference>
<dbReference type="Gene3D" id="3.40.50.300">
    <property type="entry name" value="P-loop containing nucleotide triphosphate hydrolases"/>
    <property type="match status" value="1"/>
</dbReference>
<dbReference type="Gene3D" id="2.40.30.10">
    <property type="entry name" value="Translation factors"/>
    <property type="match status" value="2"/>
</dbReference>
<dbReference type="HAMAP" id="MF_00118_B">
    <property type="entry name" value="EF_Tu_B"/>
    <property type="match status" value="1"/>
</dbReference>
<dbReference type="InterPro" id="IPR041709">
    <property type="entry name" value="EF-Tu_GTP-bd"/>
</dbReference>
<dbReference type="InterPro" id="IPR050055">
    <property type="entry name" value="EF-Tu_GTPase"/>
</dbReference>
<dbReference type="InterPro" id="IPR004161">
    <property type="entry name" value="EFTu-like_2"/>
</dbReference>
<dbReference type="InterPro" id="IPR033720">
    <property type="entry name" value="EFTU_2"/>
</dbReference>
<dbReference type="InterPro" id="IPR031157">
    <property type="entry name" value="G_TR_CS"/>
</dbReference>
<dbReference type="InterPro" id="IPR027417">
    <property type="entry name" value="P-loop_NTPase"/>
</dbReference>
<dbReference type="InterPro" id="IPR005225">
    <property type="entry name" value="Small_GTP-bd"/>
</dbReference>
<dbReference type="InterPro" id="IPR000795">
    <property type="entry name" value="T_Tr_GTP-bd_dom"/>
</dbReference>
<dbReference type="InterPro" id="IPR009000">
    <property type="entry name" value="Transl_B-barrel_sf"/>
</dbReference>
<dbReference type="InterPro" id="IPR009001">
    <property type="entry name" value="Transl_elong_EF1A/Init_IF2_C"/>
</dbReference>
<dbReference type="InterPro" id="IPR004541">
    <property type="entry name" value="Transl_elong_EFTu/EF1A_bac/org"/>
</dbReference>
<dbReference type="InterPro" id="IPR004160">
    <property type="entry name" value="Transl_elong_EFTu/EF1A_C"/>
</dbReference>
<dbReference type="NCBIfam" id="TIGR00485">
    <property type="entry name" value="EF-Tu"/>
    <property type="match status" value="1"/>
</dbReference>
<dbReference type="NCBIfam" id="NF000766">
    <property type="entry name" value="PRK00049.1"/>
    <property type="match status" value="1"/>
</dbReference>
<dbReference type="NCBIfam" id="NF009372">
    <property type="entry name" value="PRK12735.1"/>
    <property type="match status" value="1"/>
</dbReference>
<dbReference type="NCBIfam" id="NF009373">
    <property type="entry name" value="PRK12736.1"/>
    <property type="match status" value="1"/>
</dbReference>
<dbReference type="NCBIfam" id="TIGR00231">
    <property type="entry name" value="small_GTP"/>
    <property type="match status" value="1"/>
</dbReference>
<dbReference type="PANTHER" id="PTHR43721:SF22">
    <property type="entry name" value="ELONGATION FACTOR TU, MITOCHONDRIAL"/>
    <property type="match status" value="1"/>
</dbReference>
<dbReference type="PANTHER" id="PTHR43721">
    <property type="entry name" value="ELONGATION FACTOR TU-RELATED"/>
    <property type="match status" value="1"/>
</dbReference>
<dbReference type="Pfam" id="PF00009">
    <property type="entry name" value="GTP_EFTU"/>
    <property type="match status" value="1"/>
</dbReference>
<dbReference type="Pfam" id="PF03144">
    <property type="entry name" value="GTP_EFTU_D2"/>
    <property type="match status" value="1"/>
</dbReference>
<dbReference type="Pfam" id="PF03143">
    <property type="entry name" value="GTP_EFTU_D3"/>
    <property type="match status" value="1"/>
</dbReference>
<dbReference type="PRINTS" id="PR00315">
    <property type="entry name" value="ELONGATNFCT"/>
</dbReference>
<dbReference type="SUPFAM" id="SSF50465">
    <property type="entry name" value="EF-Tu/eEF-1alpha/eIF2-gamma C-terminal domain"/>
    <property type="match status" value="1"/>
</dbReference>
<dbReference type="SUPFAM" id="SSF52540">
    <property type="entry name" value="P-loop containing nucleoside triphosphate hydrolases"/>
    <property type="match status" value="1"/>
</dbReference>
<dbReference type="SUPFAM" id="SSF50447">
    <property type="entry name" value="Translation proteins"/>
    <property type="match status" value="1"/>
</dbReference>
<dbReference type="PROSITE" id="PS00301">
    <property type="entry name" value="G_TR_1"/>
    <property type="match status" value="1"/>
</dbReference>
<dbReference type="PROSITE" id="PS51722">
    <property type="entry name" value="G_TR_2"/>
    <property type="match status" value="1"/>
</dbReference>
<protein>
    <recommendedName>
        <fullName evidence="2">Elongation factor Tu</fullName>
        <shortName evidence="2">EF-Tu</shortName>
        <ecNumber evidence="2">3.6.5.3</ecNumber>
    </recommendedName>
</protein>
<gene>
    <name evidence="2" type="primary">tuf</name>
    <name type="ordered locus">SPT_1426</name>
</gene>
<accession>C1CSB0</accession>
<proteinExistence type="inferred from homology"/>
<evidence type="ECO:0000250" key="1"/>
<evidence type="ECO:0000255" key="2">
    <source>
        <dbReference type="HAMAP-Rule" id="MF_00118"/>
    </source>
</evidence>